<organism>
    <name type="scientific">Pseudomonas fluorescens (strain SBW25)</name>
    <dbReference type="NCBI Taxonomy" id="216595"/>
    <lineage>
        <taxon>Bacteria</taxon>
        <taxon>Pseudomonadati</taxon>
        <taxon>Pseudomonadota</taxon>
        <taxon>Gammaproteobacteria</taxon>
        <taxon>Pseudomonadales</taxon>
        <taxon>Pseudomonadaceae</taxon>
        <taxon>Pseudomonas</taxon>
    </lineage>
</organism>
<protein>
    <recommendedName>
        <fullName evidence="1">Coenzyme PQQ synthesis protein B</fullName>
    </recommendedName>
    <alternativeName>
        <fullName evidence="1">Pyrroloquinoline quinone biosynthesis protein B</fullName>
    </alternativeName>
</protein>
<evidence type="ECO:0000255" key="1">
    <source>
        <dbReference type="HAMAP-Rule" id="MF_00653"/>
    </source>
</evidence>
<gene>
    <name evidence="1" type="primary">pqqB</name>
    <name type="ordered locus">PFLU_5599</name>
</gene>
<sequence length="303" mass="33115">MFVQILGSAAGGGFPQWNCNCVNCAGFRDGSLRAQARTQSSIAISDDGVNWVLCNASPDIRAQLQGFAPMQPGRALRDTGISAIILMDSQIDHTTGLLSLREGCPHQVWCTDMVHEDLSTGFPLFTMLTHWNGGLAWNRIELDASFTIPACPNLRFTPLPLRSAAPPYSPHRFDPHPGDNIGLIVEDLRTGGKLFYAPGLGKVDAPLLEIMAGSDCLLVDGTMWDDDEMQRRGVGTRTGREMGHLAQNGPGGMLDVLEQLPEQRKVLIHINNTNPILDEDSPERAELVRRNVEVAYDGMSIEL</sequence>
<feature type="chain" id="PRO_1000212436" description="Coenzyme PQQ synthesis protein B">
    <location>
        <begin position="1"/>
        <end position="303"/>
    </location>
</feature>
<comment type="function">
    <text evidence="1">May be involved in the transport of PQQ or its precursor to the periplasm.</text>
</comment>
<comment type="pathway">
    <text evidence="1">Cofactor biosynthesis; pyrroloquinoline quinone biosynthesis.</text>
</comment>
<comment type="similarity">
    <text evidence="1">Belongs to the PqqB family.</text>
</comment>
<keyword id="KW-0884">PQQ biosynthesis</keyword>
<keyword id="KW-0813">Transport</keyword>
<accession>C3K348</accession>
<dbReference type="EMBL" id="AM181176">
    <property type="protein sequence ID" value="CAY52884.1"/>
    <property type="molecule type" value="Genomic_DNA"/>
</dbReference>
<dbReference type="RefSeq" id="WP_015886194.1">
    <property type="nucleotide sequence ID" value="NC_012660.1"/>
</dbReference>
<dbReference type="SMR" id="C3K348"/>
<dbReference type="STRING" id="294.SRM1_05260"/>
<dbReference type="GeneID" id="93467231"/>
<dbReference type="PATRIC" id="fig|216595.4.peg.5722"/>
<dbReference type="eggNOG" id="COG1235">
    <property type="taxonomic scope" value="Bacteria"/>
</dbReference>
<dbReference type="HOGENOM" id="CLU_061120_0_0_6"/>
<dbReference type="OrthoDB" id="9778305at2"/>
<dbReference type="UniPathway" id="UPA00539"/>
<dbReference type="GO" id="GO:0018189">
    <property type="term" value="P:pyrroloquinoline quinone biosynthetic process"/>
    <property type="evidence" value="ECO:0007669"/>
    <property type="project" value="UniProtKB-UniRule"/>
</dbReference>
<dbReference type="CDD" id="cd16274">
    <property type="entry name" value="PQQB-like_MBL-fold"/>
    <property type="match status" value="1"/>
</dbReference>
<dbReference type="Gene3D" id="3.60.15.10">
    <property type="entry name" value="Ribonuclease Z/Hydroxyacylglutathione hydrolase-like"/>
    <property type="match status" value="1"/>
</dbReference>
<dbReference type="HAMAP" id="MF_00653">
    <property type="entry name" value="PQQ_syn_PqqB"/>
    <property type="match status" value="1"/>
</dbReference>
<dbReference type="InterPro" id="IPR001279">
    <property type="entry name" value="Metallo-B-lactamas"/>
</dbReference>
<dbReference type="InterPro" id="IPR011842">
    <property type="entry name" value="PQQ_synth_PqqB"/>
</dbReference>
<dbReference type="InterPro" id="IPR036866">
    <property type="entry name" value="RibonucZ/Hydroxyglut_hydro"/>
</dbReference>
<dbReference type="NCBIfam" id="TIGR02108">
    <property type="entry name" value="PQQ_syn_pqqB"/>
    <property type="match status" value="1"/>
</dbReference>
<dbReference type="PANTHER" id="PTHR42663:SF7">
    <property type="entry name" value="COENZYME PQQ SYNTHESIS PROTEIN B"/>
    <property type="match status" value="1"/>
</dbReference>
<dbReference type="PANTHER" id="PTHR42663">
    <property type="entry name" value="HYDROLASE C777.06C-RELATED-RELATED"/>
    <property type="match status" value="1"/>
</dbReference>
<dbReference type="Pfam" id="PF12706">
    <property type="entry name" value="Lactamase_B_2"/>
    <property type="match status" value="1"/>
</dbReference>
<dbReference type="SUPFAM" id="SSF56281">
    <property type="entry name" value="Metallo-hydrolase/oxidoreductase"/>
    <property type="match status" value="1"/>
</dbReference>
<name>PQQB_PSEFS</name>
<reference key="1">
    <citation type="journal article" date="2009" name="Genome Biol.">
        <title>Genomic and genetic analyses of diversity and plant interactions of Pseudomonas fluorescens.</title>
        <authorList>
            <person name="Silby M.W."/>
            <person name="Cerdeno-Tarraga A.M."/>
            <person name="Vernikos G.S."/>
            <person name="Giddens S.R."/>
            <person name="Jackson R.W."/>
            <person name="Preston G.M."/>
            <person name="Zhang X.-X."/>
            <person name="Moon C.D."/>
            <person name="Gehrig S.M."/>
            <person name="Godfrey S.A.C."/>
            <person name="Knight C.G."/>
            <person name="Malone J.G."/>
            <person name="Robinson Z."/>
            <person name="Spiers A.J."/>
            <person name="Harris S."/>
            <person name="Challis G.L."/>
            <person name="Yaxley A.M."/>
            <person name="Harris D."/>
            <person name="Seeger K."/>
            <person name="Murphy L."/>
            <person name="Rutter S."/>
            <person name="Squares R."/>
            <person name="Quail M.A."/>
            <person name="Saunders E."/>
            <person name="Mavromatis K."/>
            <person name="Brettin T.S."/>
            <person name="Bentley S.D."/>
            <person name="Hothersall J."/>
            <person name="Stephens E."/>
            <person name="Thomas C.M."/>
            <person name="Parkhill J."/>
            <person name="Levy S.B."/>
            <person name="Rainey P.B."/>
            <person name="Thomson N.R."/>
        </authorList>
    </citation>
    <scope>NUCLEOTIDE SEQUENCE [LARGE SCALE GENOMIC DNA]</scope>
    <source>
        <strain>SBW25</strain>
    </source>
</reference>
<proteinExistence type="inferred from homology"/>